<keyword id="KW-0210">Decarboxylase</keyword>
<keyword id="KW-0456">Lyase</keyword>
<keyword id="KW-0665">Pyrimidine biosynthesis</keyword>
<keyword id="KW-1185">Reference proteome</keyword>
<protein>
    <recommendedName>
        <fullName evidence="1">Orotidine 5'-phosphate decarboxylase</fullName>
        <ecNumber evidence="1">4.1.1.23</ecNumber>
    </recommendedName>
    <alternativeName>
        <fullName evidence="1">OMP decarboxylase</fullName>
        <shortName evidence="1">OMPDCase</shortName>
        <shortName evidence="1">OMPdecase</shortName>
    </alternativeName>
</protein>
<gene>
    <name evidence="1" type="primary">pyrF</name>
    <name type="ordered locus">HAPS_0456</name>
</gene>
<name>PYRF_GLAP5</name>
<accession>B8F472</accession>
<feature type="chain" id="PRO_1000164572" description="Orotidine 5'-phosphate decarboxylase">
    <location>
        <begin position="1"/>
        <end position="230"/>
    </location>
</feature>
<feature type="active site" description="Proton donor" evidence="1">
    <location>
        <position position="61"/>
    </location>
</feature>
<feature type="binding site" evidence="1">
    <location>
        <position position="10"/>
    </location>
    <ligand>
        <name>substrate</name>
    </ligand>
</feature>
<feature type="binding site" evidence="1">
    <location>
        <position position="32"/>
    </location>
    <ligand>
        <name>substrate</name>
    </ligand>
</feature>
<feature type="binding site" evidence="1">
    <location>
        <begin position="59"/>
        <end position="68"/>
    </location>
    <ligand>
        <name>substrate</name>
    </ligand>
</feature>
<feature type="binding site" evidence="1">
    <location>
        <position position="119"/>
    </location>
    <ligand>
        <name>substrate</name>
    </ligand>
</feature>
<feature type="binding site" evidence="1">
    <location>
        <position position="180"/>
    </location>
    <ligand>
        <name>substrate</name>
    </ligand>
</feature>
<feature type="binding site" evidence="1">
    <location>
        <position position="189"/>
    </location>
    <ligand>
        <name>substrate</name>
    </ligand>
</feature>
<feature type="binding site" evidence="1">
    <location>
        <position position="209"/>
    </location>
    <ligand>
        <name>substrate</name>
    </ligand>
</feature>
<feature type="binding site" evidence="1">
    <location>
        <position position="210"/>
    </location>
    <ligand>
        <name>substrate</name>
    </ligand>
</feature>
<comment type="function">
    <text evidence="1">Catalyzes the decarboxylation of orotidine 5'-monophosphate (OMP) to uridine 5'-monophosphate (UMP).</text>
</comment>
<comment type="catalytic activity">
    <reaction evidence="1">
        <text>orotidine 5'-phosphate + H(+) = UMP + CO2</text>
        <dbReference type="Rhea" id="RHEA:11596"/>
        <dbReference type="ChEBI" id="CHEBI:15378"/>
        <dbReference type="ChEBI" id="CHEBI:16526"/>
        <dbReference type="ChEBI" id="CHEBI:57538"/>
        <dbReference type="ChEBI" id="CHEBI:57865"/>
        <dbReference type="EC" id="4.1.1.23"/>
    </reaction>
</comment>
<comment type="pathway">
    <text evidence="1">Pyrimidine metabolism; UMP biosynthesis via de novo pathway; UMP from orotate: step 2/2.</text>
</comment>
<comment type="subunit">
    <text evidence="1">Homodimer.</text>
</comment>
<comment type="similarity">
    <text evidence="1">Belongs to the OMP decarboxylase family. Type 1 subfamily.</text>
</comment>
<organism>
    <name type="scientific">Glaesserella parasuis serovar 5 (strain SH0165)</name>
    <name type="common">Haemophilus parasuis</name>
    <dbReference type="NCBI Taxonomy" id="557723"/>
    <lineage>
        <taxon>Bacteria</taxon>
        <taxon>Pseudomonadati</taxon>
        <taxon>Pseudomonadota</taxon>
        <taxon>Gammaproteobacteria</taxon>
        <taxon>Pasteurellales</taxon>
        <taxon>Pasteurellaceae</taxon>
        <taxon>Glaesserella</taxon>
    </lineage>
</organism>
<dbReference type="EC" id="4.1.1.23" evidence="1"/>
<dbReference type="EMBL" id="CP001321">
    <property type="protein sequence ID" value="ACL32124.1"/>
    <property type="molecule type" value="Genomic_DNA"/>
</dbReference>
<dbReference type="RefSeq" id="WP_010786910.1">
    <property type="nucleotide sequence ID" value="NC_011852.1"/>
</dbReference>
<dbReference type="SMR" id="B8F472"/>
<dbReference type="STRING" id="557723.HAPS_0456"/>
<dbReference type="KEGG" id="hap:HAPS_0456"/>
<dbReference type="PATRIC" id="fig|557723.8.peg.460"/>
<dbReference type="HOGENOM" id="CLU_067069_0_0_6"/>
<dbReference type="UniPathway" id="UPA00070">
    <property type="reaction ID" value="UER00120"/>
</dbReference>
<dbReference type="Proteomes" id="UP000006743">
    <property type="component" value="Chromosome"/>
</dbReference>
<dbReference type="GO" id="GO:0005829">
    <property type="term" value="C:cytosol"/>
    <property type="evidence" value="ECO:0007669"/>
    <property type="project" value="TreeGrafter"/>
</dbReference>
<dbReference type="GO" id="GO:0004590">
    <property type="term" value="F:orotidine-5'-phosphate decarboxylase activity"/>
    <property type="evidence" value="ECO:0007669"/>
    <property type="project" value="UniProtKB-UniRule"/>
</dbReference>
<dbReference type="GO" id="GO:0006207">
    <property type="term" value="P:'de novo' pyrimidine nucleobase biosynthetic process"/>
    <property type="evidence" value="ECO:0007669"/>
    <property type="project" value="InterPro"/>
</dbReference>
<dbReference type="GO" id="GO:0044205">
    <property type="term" value="P:'de novo' UMP biosynthetic process"/>
    <property type="evidence" value="ECO:0007669"/>
    <property type="project" value="UniProtKB-UniRule"/>
</dbReference>
<dbReference type="CDD" id="cd04725">
    <property type="entry name" value="OMP_decarboxylase_like"/>
    <property type="match status" value="1"/>
</dbReference>
<dbReference type="FunFam" id="3.20.20.70:FF:000015">
    <property type="entry name" value="Orotidine 5'-phosphate decarboxylase"/>
    <property type="match status" value="1"/>
</dbReference>
<dbReference type="Gene3D" id="3.20.20.70">
    <property type="entry name" value="Aldolase class I"/>
    <property type="match status" value="1"/>
</dbReference>
<dbReference type="HAMAP" id="MF_01200_B">
    <property type="entry name" value="OMPdecase_type1_B"/>
    <property type="match status" value="1"/>
</dbReference>
<dbReference type="InterPro" id="IPR013785">
    <property type="entry name" value="Aldolase_TIM"/>
</dbReference>
<dbReference type="InterPro" id="IPR014732">
    <property type="entry name" value="OMPdecase"/>
</dbReference>
<dbReference type="InterPro" id="IPR018089">
    <property type="entry name" value="OMPdecase_AS"/>
</dbReference>
<dbReference type="InterPro" id="IPR047596">
    <property type="entry name" value="OMPdecase_bac"/>
</dbReference>
<dbReference type="InterPro" id="IPR001754">
    <property type="entry name" value="OMPdeCOase_dom"/>
</dbReference>
<dbReference type="InterPro" id="IPR011060">
    <property type="entry name" value="RibuloseP-bd_barrel"/>
</dbReference>
<dbReference type="NCBIfam" id="NF001273">
    <property type="entry name" value="PRK00230.1"/>
    <property type="match status" value="1"/>
</dbReference>
<dbReference type="NCBIfam" id="TIGR01740">
    <property type="entry name" value="pyrF"/>
    <property type="match status" value="1"/>
</dbReference>
<dbReference type="PANTHER" id="PTHR32119">
    <property type="entry name" value="OROTIDINE 5'-PHOSPHATE DECARBOXYLASE"/>
    <property type="match status" value="1"/>
</dbReference>
<dbReference type="PANTHER" id="PTHR32119:SF2">
    <property type="entry name" value="OROTIDINE 5'-PHOSPHATE DECARBOXYLASE"/>
    <property type="match status" value="1"/>
</dbReference>
<dbReference type="Pfam" id="PF00215">
    <property type="entry name" value="OMPdecase"/>
    <property type="match status" value="1"/>
</dbReference>
<dbReference type="SMART" id="SM00934">
    <property type="entry name" value="OMPdecase"/>
    <property type="match status" value="1"/>
</dbReference>
<dbReference type="SUPFAM" id="SSF51366">
    <property type="entry name" value="Ribulose-phoshate binding barrel"/>
    <property type="match status" value="1"/>
</dbReference>
<dbReference type="PROSITE" id="PS00156">
    <property type="entry name" value="OMPDECASE"/>
    <property type="match status" value="1"/>
</dbReference>
<reference key="1">
    <citation type="journal article" date="2009" name="J. Bacteriol.">
        <title>Complete genome sequence of Haemophilus parasuis SH0165.</title>
        <authorList>
            <person name="Yue M."/>
            <person name="Yang F."/>
            <person name="Yang J."/>
            <person name="Bei W."/>
            <person name="Cai X."/>
            <person name="Chen L."/>
            <person name="Dong J."/>
            <person name="Zhou R."/>
            <person name="Jin M."/>
            <person name="Jin Q."/>
            <person name="Chen H."/>
        </authorList>
    </citation>
    <scope>NUCLEOTIDE SEQUENCE [LARGE SCALE GENOMIC DNA]</scope>
    <source>
        <strain>SH0165</strain>
    </source>
</reference>
<proteinExistence type="inferred from homology"/>
<sequence>MDNKIIVALDYETEAEALNFVDQVDPSLCRLKVGKEMFTTLGTHFVKQLQDRKFDVFLDLKYHDIPNTVARAVRSAADLGVWMVDLHACGGLRMMETAKQILEPYGKDAPLLIGVTVLTSMEDLDLLQIGINASPMEQVIRLAHLCQRAGLDGVVCSPQEVEVLRTHCGKDFKLVTPGIRPEGSDFGDQRRVMTPKQAIEIGSDYLVIGRPITQAADPLAVLKSINQSIA</sequence>
<evidence type="ECO:0000255" key="1">
    <source>
        <dbReference type="HAMAP-Rule" id="MF_01200"/>
    </source>
</evidence>